<comment type="function">
    <text>This peptide has bactericidal activity.</text>
</comment>
<comment type="subcellular location">
    <subcellularLocation>
        <location>Secreted</location>
    </subcellularLocation>
</comment>
<reference key="1">
    <citation type="journal article" date="1994" name="J. Biol. Chem.">
        <title>Acute transcriptional response of the honeybee peptide-antibiotics gene repertoire and required post-translational conversion of the precursor structures.</title>
        <authorList>
            <person name="Casteels-Josson K."/>
            <person name="Zhang W."/>
            <person name="Capaci T."/>
            <person name="Casteels P."/>
            <person name="Tempst P."/>
        </authorList>
    </citation>
    <scope>NUCLEOTIDE SEQUENCE [MRNA]</scope>
</reference>
<reference key="2">
    <citation type="journal article" date="1990" name="Eur. J. Biochem.">
        <title>Isolation and characterization of abaecin, a major antibacterial response peptide in the honeybee (Apis mellifera).</title>
        <authorList>
            <person name="Casteels P."/>
            <person name="Ampe C."/>
            <person name="Riviere L."/>
            <person name="van Damme J."/>
            <person name="Elicone C."/>
            <person name="Jacobs F."/>
            <person name="Tempst P."/>
        </authorList>
    </citation>
    <scope>PROTEIN SEQUENCE OF 20-53</scope>
    <source>
        <tissue>Hemolymph</tissue>
    </source>
</reference>
<keyword id="KW-0044">Antibiotic</keyword>
<keyword id="KW-0929">Antimicrobial</keyword>
<keyword id="KW-0903">Direct protein sequencing</keyword>
<keyword id="KW-0391">Immunity</keyword>
<keyword id="KW-0399">Innate immunity</keyword>
<keyword id="KW-1185">Reference proteome</keyword>
<keyword id="KW-0964">Secreted</keyword>
<keyword id="KW-0732">Signal</keyword>
<evidence type="ECO:0000269" key="1">
    <source>
    </source>
</evidence>
<accession>P15450</accession>
<feature type="signal peptide" evidence="1">
    <location>
        <begin position="1"/>
        <end position="19"/>
    </location>
</feature>
<feature type="chain" id="PRO_0000004946" description="Abaecin">
    <location>
        <begin position="20"/>
        <end position="53"/>
    </location>
</feature>
<feature type="sequence variant">
    <original>G</original>
    <variation>S</variation>
    <location>
        <position position="52"/>
    </location>
</feature>
<dbReference type="EMBL" id="U15954">
    <property type="protein sequence ID" value="AAA67442.1"/>
    <property type="molecule type" value="mRNA"/>
</dbReference>
<dbReference type="PIR" id="B55392">
    <property type="entry name" value="B55392"/>
</dbReference>
<dbReference type="RefSeq" id="NP_001011617.1">
    <property type="nucleotide sequence ID" value="NM_001011617.1"/>
</dbReference>
<dbReference type="STRING" id="7460.P15450"/>
<dbReference type="TCDB" id="1.C.116.1.1">
    <property type="family name" value="the membrane-permeabilizing peptide, abaecin (abaecin) family"/>
</dbReference>
<dbReference type="PaxDb" id="7460-GB47318-PA"/>
<dbReference type="EnsemblMetazoa" id="NM_001011617">
    <property type="protein sequence ID" value="NP_001011617"/>
    <property type="gene ID" value="LOC406144"/>
</dbReference>
<dbReference type="GeneID" id="406144"/>
<dbReference type="KEGG" id="ame:406144"/>
<dbReference type="HOGENOM" id="CLU_3089147_0_0_1"/>
<dbReference type="InParanoid" id="P15450"/>
<dbReference type="OMA" id="FAYVPLP"/>
<dbReference type="OrthoDB" id="10012075at2759"/>
<dbReference type="PhylomeDB" id="P15450"/>
<dbReference type="Proteomes" id="UP000005203">
    <property type="component" value="Linkage group LG10"/>
</dbReference>
<dbReference type="GO" id="GO:0005576">
    <property type="term" value="C:extracellular region"/>
    <property type="evidence" value="ECO:0007669"/>
    <property type="project" value="UniProtKB-SubCell"/>
</dbReference>
<dbReference type="GO" id="GO:0042742">
    <property type="term" value="P:defense response to bacterium"/>
    <property type="evidence" value="ECO:0007669"/>
    <property type="project" value="UniProtKB-KW"/>
</dbReference>
<dbReference type="GO" id="GO:0042381">
    <property type="term" value="P:hemolymph coagulation"/>
    <property type="evidence" value="ECO:0007669"/>
    <property type="project" value="InterPro"/>
</dbReference>
<dbReference type="InterPro" id="IPR012524">
    <property type="entry name" value="Abaecin_antimicrobial_peptide"/>
</dbReference>
<dbReference type="Pfam" id="PF08026">
    <property type="entry name" value="Antimicrobial_5"/>
    <property type="match status" value="1"/>
</dbReference>
<sequence>MKVVIFIFALLATICAAFAYVPLPNVPQPGRRPFPTFPGQGPFNPKIKWPQGY</sequence>
<name>ABAE_APIME</name>
<organism>
    <name type="scientific">Apis mellifera</name>
    <name type="common">Honeybee</name>
    <dbReference type="NCBI Taxonomy" id="7460"/>
    <lineage>
        <taxon>Eukaryota</taxon>
        <taxon>Metazoa</taxon>
        <taxon>Ecdysozoa</taxon>
        <taxon>Arthropoda</taxon>
        <taxon>Hexapoda</taxon>
        <taxon>Insecta</taxon>
        <taxon>Pterygota</taxon>
        <taxon>Neoptera</taxon>
        <taxon>Endopterygota</taxon>
        <taxon>Hymenoptera</taxon>
        <taxon>Apocrita</taxon>
        <taxon>Aculeata</taxon>
        <taxon>Apoidea</taxon>
        <taxon>Anthophila</taxon>
        <taxon>Apidae</taxon>
        <taxon>Apis</taxon>
    </lineage>
</organism>
<protein>
    <recommendedName>
        <fullName>Abaecin</fullName>
    </recommendedName>
</protein>
<proteinExistence type="evidence at protein level"/>